<keyword id="KW-0025">Alternative splicing</keyword>
<keyword id="KW-0903">Direct protein sequencing</keyword>
<keyword id="KW-1185">Reference proteome</keyword>
<keyword id="KW-0677">Repeat</keyword>
<keyword id="KW-0964">Secreted</keyword>
<keyword id="KW-0732">Signal</keyword>
<evidence type="ECO:0000255" key="1"/>
<evidence type="ECO:0000256" key="2">
    <source>
        <dbReference type="SAM" id="MobiDB-lite"/>
    </source>
</evidence>
<evidence type="ECO:0000269" key="3">
    <source>
    </source>
</evidence>
<evidence type="ECO:0000303" key="4">
    <source>
    </source>
</evidence>
<evidence type="ECO:0000305" key="5"/>
<evidence type="ECO:0000312" key="6">
    <source>
        <dbReference type="FlyBase" id="FBgn0000427"/>
    </source>
</evidence>
<comment type="function">
    <text evidence="3">Required for proper assembly of the eggshell.</text>
</comment>
<comment type="subcellular location">
    <subcellularLocation>
        <location evidence="3">Secreted</location>
    </subcellularLocation>
</comment>
<comment type="alternative products">
    <event type="alternative splicing"/>
    <isoform>
        <id>P18170-1</id>
        <name>FC106</name>
        <sequence type="displayed"/>
    </isoform>
    <isoform>
        <id>P18169-1</id>
        <name>FC125</name>
        <sequence type="external"/>
    </isoform>
    <isoform>
        <id>P18171-1</id>
        <name>FC177</name>
        <sequence type="external"/>
    </isoform>
</comment>
<comment type="developmental stage">
    <text evidence="3">Synthesized in early stage 10 egg chambers. Cleavage generates S80, a 80 kDa species, during late stage 10 which is incorporated into the eggshell. During the latter stages of chorion formation, S80 is processed to a 60 kDa component, S60.</text>
</comment>
<comment type="PTM">
    <text>Proteolytic cleavage of isoform FC106 generates 2 further products, S80 and S60.</text>
</comment>
<comment type="miscellaneous">
    <text>Allele FC1 is found only in strain Samarkand, allele FC3 only in strain Shahrinau and FC4 only in strain Dilizhan. Allele FC2 Is found in both strains Israel and Ghanghry.</text>
</comment>
<comment type="sequence caution" evidence="5">
    <conflict type="frameshift">
        <sequence resource="EMBL-CDS" id="AAA28447"/>
    </conflict>
</comment>
<feature type="signal peptide" evidence="1">
    <location>
        <begin position="1"/>
        <end position="19"/>
    </location>
</feature>
<feature type="chain" id="PRO_0000021098" description="Defective chorion protein, FC106 isoform">
    <location>
        <begin position="20"/>
        <end position="950"/>
    </location>
</feature>
<feature type="chain" id="PRO_0000021099" description="FC106 S80">
    <location>
        <begin position="279"/>
        <end position="950"/>
    </location>
</feature>
<feature type="chain" id="PRO_0000021100" description="FC106 S60">
    <location>
        <begin position="279"/>
        <end status="unknown"/>
    </location>
</feature>
<feature type="repeat" description="1">
    <location>
        <begin position="493"/>
        <end position="518"/>
    </location>
</feature>
<feature type="repeat" description="2">
    <location>
        <begin position="519"/>
        <end position="544"/>
    </location>
</feature>
<feature type="repeat" description="3">
    <location>
        <begin position="545"/>
        <end position="570"/>
    </location>
</feature>
<feature type="repeat" description="4">
    <location>
        <begin position="571"/>
        <end position="596"/>
    </location>
</feature>
<feature type="repeat" description="5">
    <location>
        <begin position="597"/>
        <end position="622"/>
    </location>
</feature>
<feature type="repeat" description="6; approximate">
    <location>
        <begin position="623"/>
        <end position="652"/>
    </location>
</feature>
<feature type="repeat" description="7; approximate">
    <location>
        <begin position="653"/>
        <end position="680"/>
    </location>
</feature>
<feature type="repeat" description="8; approximate">
    <location>
        <begin position="681"/>
        <end position="696"/>
    </location>
</feature>
<feature type="repeat" description="9; approximate">
    <location>
        <begin position="697"/>
        <end position="720"/>
    </location>
</feature>
<feature type="repeat" description="10; approximate">
    <location>
        <begin position="721"/>
        <end position="733"/>
    </location>
</feature>
<feature type="repeat" description="11; approximate">
    <location>
        <begin position="734"/>
        <end position="758"/>
    </location>
</feature>
<feature type="repeat" description="12; approximate">
    <location>
        <begin position="759"/>
        <end position="788"/>
    </location>
</feature>
<feature type="region of interest" description="Disordered" evidence="2">
    <location>
        <begin position="23"/>
        <end position="60"/>
    </location>
</feature>
<feature type="region of interest" description="Disordered" evidence="2">
    <location>
        <begin position="184"/>
        <end position="212"/>
    </location>
</feature>
<feature type="region of interest" description="Disordered" evidence="2">
    <location>
        <begin position="268"/>
        <end position="294"/>
    </location>
</feature>
<feature type="region of interest" description="12 X 26 AA approximate tandem repeats, Glu, Met-rich">
    <location>
        <begin position="493"/>
        <end position="788"/>
    </location>
</feature>
<feature type="region of interest" description="Disordered" evidence="2">
    <location>
        <begin position="843"/>
        <end position="875"/>
    </location>
</feature>
<feature type="compositionally biased region" description="Polar residues" evidence="2">
    <location>
        <begin position="32"/>
        <end position="41"/>
    </location>
</feature>
<feature type="compositionally biased region" description="Low complexity" evidence="2">
    <location>
        <begin position="268"/>
        <end position="280"/>
    </location>
</feature>
<feature type="sequence variant" description="In allele DEC-1-FC4.">
    <location>
        <begin position="545"/>
        <end position="622"/>
    </location>
</feature>
<feature type="sequence variant" description="In allele DEC-1-FC2-Israel.">
    <location>
        <begin position="545"/>
        <end position="570"/>
    </location>
</feature>
<feature type="sequence variant" description="In allele DEC-1-FC3.">
    <location>
        <begin position="571"/>
        <end position="622"/>
    </location>
</feature>
<feature type="sequence variant" description="In allele DEC-1-FC2-Ghanghry.">
    <location>
        <begin position="597"/>
        <end position="622"/>
    </location>
</feature>
<feature type="sequence variant" description="In allele DEC-1-FC3.">
    <original>M</original>
    <variation>V</variation>
    <location>
        <position position="627"/>
    </location>
</feature>
<feature type="sequence variant" description="In allele DEC-1-FC4.">
    <original>Q</original>
    <variation>H</variation>
    <location>
        <position position="644"/>
    </location>
</feature>
<feature type="sequence variant" description="In allele DEC-1-FC3.">
    <original>Q</original>
    <variation>H</variation>
    <location>
        <position position="690"/>
    </location>
</feature>
<feature type="sequence conflict" description="In Ref. 1; AAA28447 and 4; CAA53815." evidence="5" ref="1 4">
    <original>A</original>
    <variation>V</variation>
    <location>
        <position position="17"/>
    </location>
</feature>
<feature type="sequence conflict" description="In Ref. 1; AAA28447." evidence="5" ref="1">
    <original>Q</original>
    <variation>E</variation>
    <location>
        <position position="219"/>
    </location>
</feature>
<feature type="sequence conflict" description="In Ref. 1; AAA28447." evidence="5" ref="1">
    <original>D</original>
    <variation>H</variation>
    <location>
        <position position="347"/>
    </location>
</feature>
<feature type="sequence conflict" description="In Ref. 1; AAA28447." evidence="5" ref="1">
    <original>A</original>
    <variation>T</variation>
    <location>
        <position position="382"/>
    </location>
</feature>
<feature type="sequence conflict" description="In Ref. 1; AAA28447." evidence="5" ref="1">
    <original>PENEGTARHKVDALGVGGNKRKKSKSKSAPP</original>
    <variation>AGERRHRQAQSRCPGSWRQQAQEVQVQVGAA</variation>
    <location>
        <begin position="847"/>
        <end position="877"/>
    </location>
</feature>
<feature type="sequence conflict" description="In Ref. 1." evidence="5" ref="1">
    <original>QRPVVQSYGTSYGG</original>
    <variation>SVRWFRVTEQATAE</variation>
    <location>
        <begin position="888"/>
        <end position="901"/>
    </location>
</feature>
<proteinExistence type="evidence at protein level"/>
<sequence>MRLFSLLPLLALLVVQAAGQSEVTSDDPATDAGSTTNSTTDTKPRIPSQDEILGQMPSINPIRTGNPQMDAFYMMFPALGSLLKWGSLFPAYSILGAIPDNLQPTAAASKVVLVLADDATAKTRVARQNPPPNPLGQLMNWPALPQDFQLPSMDLGPQVGSFLAQLPAMPTVPGLLGAAAPVPAPAPAPAAAPPPAPAPAADPPAAPVPDAPQPAILGQAALQNAFTFFNPANFDASSLLGQSVPTFAPPNLDFVAQMQRQFFPGMTPAQPAAAGTDAQASDISEVRVRPEDPYSQEAQMKIKSALEMEQERQQQAQVKDQEQVPLLWFRMPTTQNQDATEEKTLEDLRVEAKLRAFERQVIAELRMLQKIELMAKQMRSSAAAQNGDSPYRISYPLSRTPIHKITRADIEQALRDDYVRRLVNKEAQRRARNSGINTQKANALKRQAKSQDQTLSKEDIVQIMAYAYRMANEQMESEKGKQDKVYAAYRTEQNPMMMQQRQWSEEQAKIQQNQQQIQQNPMMMQQRQWSEEQAKIQQNQQQIQQNPMMMQQRQWSEEQAKIQQNQQQIQQNPMMMQQRQWSEEQAKIQQNQQQIQQNPMMVQQRQWSEEQAKIQQNQQQIQQNPMMMQQRQWSEEQAKIQHDQQMAQQMAQQGLMMTEQRQRQWSEDQAKIQQAQQMAQQTPMMMPQMQQRQWTEDPQMVQQMQQRQWAEDQTRMQMAQQNPMMQQQRQMAENPQMMQQRQWSEEQTKIEQAQQMAQQNQMMMQQMQQRQWSEDQAQIQQQQRQMMQQTPMMMKERQWAEENPQSVQQQGPMMMQQQMPSMMQREVEDEDNKAEDDLVGEAGPQMPENEGTARHKVDALGVGGNKRKKSKSKSAPPTVINYYYAAPQRPVVQSYGTSYGGGGYGSNAYGVPRPVNSYQSQGYRAAVGNDEVDEMLRQHQTMARATHFRQ</sequence>
<reference key="1">
    <citation type="journal article" date="1990" name="Dev. Biol.">
        <title>Multiple proteins are produced from the dec-1 eggshell gene in Drosophila by alternative RNA splicing and proteolytic cleavage events.</title>
        <authorList>
            <person name="Waring G.L."/>
            <person name="Hawley R.J."/>
            <person name="Schoenfeld T."/>
        </authorList>
    </citation>
    <scope>NUCLEOTIDE SEQUENCE [MRNA]</scope>
    <scope>PROTEIN SEQUENCE OF 279-299</scope>
    <scope>ALTERNATIVE SPLICING</scope>
</reference>
<reference key="2">
    <citation type="journal article" date="2000" name="Science">
        <title>The genome sequence of Drosophila melanogaster.</title>
        <authorList>
            <person name="Adams M.D."/>
            <person name="Celniker S.E."/>
            <person name="Holt R.A."/>
            <person name="Evans C.A."/>
            <person name="Gocayne J.D."/>
            <person name="Amanatides P.G."/>
            <person name="Scherer S.E."/>
            <person name="Li P.W."/>
            <person name="Hoskins R.A."/>
            <person name="Galle R.F."/>
            <person name="George R.A."/>
            <person name="Lewis S.E."/>
            <person name="Richards S."/>
            <person name="Ashburner M."/>
            <person name="Henderson S.N."/>
            <person name="Sutton G.G."/>
            <person name="Wortman J.R."/>
            <person name="Yandell M.D."/>
            <person name="Zhang Q."/>
            <person name="Chen L.X."/>
            <person name="Brandon R.C."/>
            <person name="Rogers Y.-H.C."/>
            <person name="Blazej R.G."/>
            <person name="Champe M."/>
            <person name="Pfeiffer B.D."/>
            <person name="Wan K.H."/>
            <person name="Doyle C."/>
            <person name="Baxter E.G."/>
            <person name="Helt G."/>
            <person name="Nelson C.R."/>
            <person name="Miklos G.L.G."/>
            <person name="Abril J.F."/>
            <person name="Agbayani A."/>
            <person name="An H.-J."/>
            <person name="Andrews-Pfannkoch C."/>
            <person name="Baldwin D."/>
            <person name="Ballew R.M."/>
            <person name="Basu A."/>
            <person name="Baxendale J."/>
            <person name="Bayraktaroglu L."/>
            <person name="Beasley E.M."/>
            <person name="Beeson K.Y."/>
            <person name="Benos P.V."/>
            <person name="Berman B.P."/>
            <person name="Bhandari D."/>
            <person name="Bolshakov S."/>
            <person name="Borkova D."/>
            <person name="Botchan M.R."/>
            <person name="Bouck J."/>
            <person name="Brokstein P."/>
            <person name="Brottier P."/>
            <person name="Burtis K.C."/>
            <person name="Busam D.A."/>
            <person name="Butler H."/>
            <person name="Cadieu E."/>
            <person name="Center A."/>
            <person name="Chandra I."/>
            <person name="Cherry J.M."/>
            <person name="Cawley S."/>
            <person name="Dahlke C."/>
            <person name="Davenport L.B."/>
            <person name="Davies P."/>
            <person name="de Pablos B."/>
            <person name="Delcher A."/>
            <person name="Deng Z."/>
            <person name="Mays A.D."/>
            <person name="Dew I."/>
            <person name="Dietz S.M."/>
            <person name="Dodson K."/>
            <person name="Doup L.E."/>
            <person name="Downes M."/>
            <person name="Dugan-Rocha S."/>
            <person name="Dunkov B.C."/>
            <person name="Dunn P."/>
            <person name="Durbin K.J."/>
            <person name="Evangelista C.C."/>
            <person name="Ferraz C."/>
            <person name="Ferriera S."/>
            <person name="Fleischmann W."/>
            <person name="Fosler C."/>
            <person name="Gabrielian A.E."/>
            <person name="Garg N.S."/>
            <person name="Gelbart W.M."/>
            <person name="Glasser K."/>
            <person name="Glodek A."/>
            <person name="Gong F."/>
            <person name="Gorrell J.H."/>
            <person name="Gu Z."/>
            <person name="Guan P."/>
            <person name="Harris M."/>
            <person name="Harris N.L."/>
            <person name="Harvey D.A."/>
            <person name="Heiman T.J."/>
            <person name="Hernandez J.R."/>
            <person name="Houck J."/>
            <person name="Hostin D."/>
            <person name="Houston K.A."/>
            <person name="Howland T.J."/>
            <person name="Wei M.-H."/>
            <person name="Ibegwam C."/>
            <person name="Jalali M."/>
            <person name="Kalush F."/>
            <person name="Karpen G.H."/>
            <person name="Ke Z."/>
            <person name="Kennison J.A."/>
            <person name="Ketchum K.A."/>
            <person name="Kimmel B.E."/>
            <person name="Kodira C.D."/>
            <person name="Kraft C.L."/>
            <person name="Kravitz S."/>
            <person name="Kulp D."/>
            <person name="Lai Z."/>
            <person name="Lasko P."/>
            <person name="Lei Y."/>
            <person name="Levitsky A.A."/>
            <person name="Li J.H."/>
            <person name="Li Z."/>
            <person name="Liang Y."/>
            <person name="Lin X."/>
            <person name="Liu X."/>
            <person name="Mattei B."/>
            <person name="McIntosh T.C."/>
            <person name="McLeod M.P."/>
            <person name="McPherson D."/>
            <person name="Merkulov G."/>
            <person name="Milshina N.V."/>
            <person name="Mobarry C."/>
            <person name="Morris J."/>
            <person name="Moshrefi A."/>
            <person name="Mount S.M."/>
            <person name="Moy M."/>
            <person name="Murphy B."/>
            <person name="Murphy L."/>
            <person name="Muzny D.M."/>
            <person name="Nelson D.L."/>
            <person name="Nelson D.R."/>
            <person name="Nelson K.A."/>
            <person name="Nixon K."/>
            <person name="Nusskern D.R."/>
            <person name="Pacleb J.M."/>
            <person name="Palazzolo M."/>
            <person name="Pittman G.S."/>
            <person name="Pan S."/>
            <person name="Pollard J."/>
            <person name="Puri V."/>
            <person name="Reese M.G."/>
            <person name="Reinert K."/>
            <person name="Remington K."/>
            <person name="Saunders R.D.C."/>
            <person name="Scheeler F."/>
            <person name="Shen H."/>
            <person name="Shue B.C."/>
            <person name="Siden-Kiamos I."/>
            <person name="Simpson M."/>
            <person name="Skupski M.P."/>
            <person name="Smith T.J."/>
            <person name="Spier E."/>
            <person name="Spradling A.C."/>
            <person name="Stapleton M."/>
            <person name="Strong R."/>
            <person name="Sun E."/>
            <person name="Svirskas R."/>
            <person name="Tector C."/>
            <person name="Turner R."/>
            <person name="Venter E."/>
            <person name="Wang A.H."/>
            <person name="Wang X."/>
            <person name="Wang Z.-Y."/>
            <person name="Wassarman D.A."/>
            <person name="Weinstock G.M."/>
            <person name="Weissenbach J."/>
            <person name="Williams S.M."/>
            <person name="Woodage T."/>
            <person name="Worley K.C."/>
            <person name="Wu D."/>
            <person name="Yang S."/>
            <person name="Yao Q.A."/>
            <person name="Ye J."/>
            <person name="Yeh R.-F."/>
            <person name="Zaveri J.S."/>
            <person name="Zhan M."/>
            <person name="Zhang G."/>
            <person name="Zhao Q."/>
            <person name="Zheng L."/>
            <person name="Zheng X.H."/>
            <person name="Zhong F.N."/>
            <person name="Zhong W."/>
            <person name="Zhou X."/>
            <person name="Zhu S.C."/>
            <person name="Zhu X."/>
            <person name="Smith H.O."/>
            <person name="Gibbs R.A."/>
            <person name="Myers E.W."/>
            <person name="Rubin G.M."/>
            <person name="Venter J.C."/>
        </authorList>
    </citation>
    <scope>NUCLEOTIDE SEQUENCE [LARGE SCALE GENOMIC DNA]</scope>
    <source>
        <strain>Berkeley</strain>
    </source>
</reference>
<reference key="3">
    <citation type="journal article" date="2002" name="Genome Biol.">
        <title>Annotation of the Drosophila melanogaster euchromatic genome: a systematic review.</title>
        <authorList>
            <person name="Misra S."/>
            <person name="Crosby M.A."/>
            <person name="Mungall C.J."/>
            <person name="Matthews B.B."/>
            <person name="Campbell K.S."/>
            <person name="Hradecky P."/>
            <person name="Huang Y."/>
            <person name="Kaminker J.S."/>
            <person name="Millburn G.H."/>
            <person name="Prochnik S.E."/>
            <person name="Smith C.D."/>
            <person name="Tupy J.L."/>
            <person name="Whitfield E.J."/>
            <person name="Bayraktaroglu L."/>
            <person name="Berman B.P."/>
            <person name="Bettencourt B.R."/>
            <person name="Celniker S.E."/>
            <person name="de Grey A.D.N.J."/>
            <person name="Drysdale R.A."/>
            <person name="Harris N.L."/>
            <person name="Richter J."/>
            <person name="Russo S."/>
            <person name="Schroeder A.J."/>
            <person name="Shu S.Q."/>
            <person name="Stapleton M."/>
            <person name="Yamada C."/>
            <person name="Ashburner M."/>
            <person name="Gelbart W.M."/>
            <person name="Rubin G.M."/>
            <person name="Lewis S.E."/>
        </authorList>
    </citation>
    <scope>GENOME REANNOTATION</scope>
    <scope>ALTERNATIVE SPLICING</scope>
    <source>
        <strain>Berkeley</strain>
    </source>
</reference>
<reference key="4">
    <citation type="journal article" date="1991" name="J. Mol. Evol.">
        <title>Evolution of the dec-1 eggshell locus in Drosophila. I. Restriction site mapping and limited sequence comparison in the melanogaster species subgroup.</title>
        <authorList>
            <person name="Andersson S."/>
            <person name="Lambertsson A."/>
        </authorList>
    </citation>
    <scope>NUCLEOTIDE SEQUENCE OF 1-369 AND 425-596</scope>
    <source>
        <strain>Samarkand</strain>
    </source>
</reference>
<reference key="5">
    <citation type="journal article" date="1993" name="J. Mol. Evol.">
        <title>Evolution of the dec-1 eggshell locus in Drosophila. II. Intraspecific DNA sequence analysis reveals length mutations in a repetitive region in D. melanogaster.</title>
        <authorList>
            <person name="Andersson S."/>
            <person name="Lambertsson A."/>
        </authorList>
    </citation>
    <scope>NUCLEOTIDE SEQUENCE OF 493-698 (ALLELES FC1; FC2; FC3 AND FC4)</scope>
    <source>
        <strain>Dilizhan</strain>
        <strain>Ghanghry</strain>
        <strain>Israel</strain>
        <strain>Samarkand</strain>
        <strain>Shahrinau</strain>
    </source>
</reference>
<reference key="6">
    <citation type="journal article" date="1988" name="Genes Dev.">
        <title>Cloning and analysis of the dec-1 female-sterile locus, a gene required for proper assembly of the Drosophila eggshell.</title>
        <authorList>
            <person name="Hawley R.J."/>
            <person name="Waring G.L."/>
        </authorList>
    </citation>
    <scope>FUNCTION</scope>
    <scope>SUBCELLULAR LOCATION</scope>
    <scope>DEVELOPMENTAL STAGE</scope>
</reference>
<name>DEC12_DROME</name>
<accession>P18170</accession>
<accession>P92153</accession>
<accession>P92154</accession>
<accession>Q24299</accession>
<accession>Q26309</accession>
<accession>Q26310</accession>
<accession>Q26311</accession>
<accession>Q8IRP0</accession>
<gene>
    <name evidence="6" type="primary">dec</name>
    <name evidence="4" type="synonym">dec-1</name>
    <name evidence="6" type="ORF">CG2175</name>
</gene>
<organism>
    <name type="scientific">Drosophila melanogaster</name>
    <name type="common">Fruit fly</name>
    <dbReference type="NCBI Taxonomy" id="7227"/>
    <lineage>
        <taxon>Eukaryota</taxon>
        <taxon>Metazoa</taxon>
        <taxon>Ecdysozoa</taxon>
        <taxon>Arthropoda</taxon>
        <taxon>Hexapoda</taxon>
        <taxon>Insecta</taxon>
        <taxon>Pterygota</taxon>
        <taxon>Neoptera</taxon>
        <taxon>Endopterygota</taxon>
        <taxon>Diptera</taxon>
        <taxon>Brachycera</taxon>
        <taxon>Muscomorpha</taxon>
        <taxon>Ephydroidea</taxon>
        <taxon>Drosophilidae</taxon>
        <taxon>Drosophila</taxon>
        <taxon>Sophophora</taxon>
    </lineage>
</organism>
<protein>
    <recommendedName>
        <fullName evidence="5">Defective chorion protein, FC106 isoform</fullName>
    </recommendedName>
    <component>
        <recommendedName>
            <fullName evidence="5">Defective chorion protein, FC106 isoform</fullName>
        </recommendedName>
    </component>
    <component>
        <recommendedName>
            <fullName evidence="5">FC106 S80</fullName>
        </recommendedName>
    </component>
    <component>
        <recommendedName>
            <fullName evidence="5">FC106 S60</fullName>
        </recommendedName>
    </component>
</protein>
<dbReference type="EMBL" id="M35888">
    <property type="protein sequence ID" value="AAA28447.1"/>
    <property type="status" value="ALT_FRAME"/>
    <property type="molecule type" value="mRNA"/>
</dbReference>
<dbReference type="EMBL" id="AE014298">
    <property type="protein sequence ID" value="AAN09216.1"/>
    <property type="molecule type" value="Genomic_DNA"/>
</dbReference>
<dbReference type="EMBL" id="X76230">
    <property type="protein sequence ID" value="CAA53815.1"/>
    <property type="molecule type" value="Genomic_DNA"/>
</dbReference>
<dbReference type="EMBL" id="X76231">
    <property type="protein sequence ID" value="CAA53816.1"/>
    <property type="molecule type" value="Genomic_DNA"/>
</dbReference>
<dbReference type="EMBL" id="S64529">
    <property type="protein sequence ID" value="AAB27801.2"/>
    <property type="molecule type" value="Genomic_DNA"/>
</dbReference>
<dbReference type="EMBL" id="S64530">
    <property type="protein sequence ID" value="AAB27802.2"/>
    <property type="molecule type" value="Genomic_DNA"/>
</dbReference>
<dbReference type="EMBL" id="S64531">
    <property type="protein sequence ID" value="AAB27803.2"/>
    <property type="molecule type" value="Genomic_DNA"/>
</dbReference>
<dbReference type="EMBL" id="S64532">
    <property type="protein sequence ID" value="AAB27804.2"/>
    <property type="molecule type" value="Genomic_DNA"/>
</dbReference>
<dbReference type="EMBL" id="S64534">
    <property type="protein sequence ID" value="AAB27805.2"/>
    <property type="molecule type" value="Genomic_DNA"/>
</dbReference>
<dbReference type="PIR" id="B44766">
    <property type="entry name" value="B44766"/>
</dbReference>
<dbReference type="RefSeq" id="NP_727203.1">
    <molecule id="P18170-1"/>
    <property type="nucleotide sequence ID" value="NM_167133.2"/>
</dbReference>
<dbReference type="SMR" id="P18170"/>
<dbReference type="BioGRID" id="58165">
    <property type="interactions" value="5"/>
</dbReference>
<dbReference type="DNASU" id="31691"/>
<dbReference type="EnsemblMetazoa" id="FBtr0071147">
    <molecule id="P18170-1"/>
    <property type="protein sequence ID" value="FBpp0071099"/>
    <property type="gene ID" value="FBgn0000427"/>
</dbReference>
<dbReference type="GeneID" id="31691"/>
<dbReference type="AGR" id="FB:FBgn0000427"/>
<dbReference type="CTD" id="31691"/>
<dbReference type="FlyBase" id="FBgn0000427">
    <property type="gene designation" value="dec"/>
</dbReference>
<dbReference type="VEuPathDB" id="VectorBase:FBgn0000427"/>
<dbReference type="HOGENOM" id="CLU_008795_0_0_1"/>
<dbReference type="OrthoDB" id="8070541at2759"/>
<dbReference type="BioGRID-ORCS" id="31691">
    <property type="hits" value="0 hits in 1 CRISPR screen"/>
</dbReference>
<dbReference type="GenomeRNAi" id="31691"/>
<dbReference type="Proteomes" id="UP000000803">
    <property type="component" value="Chromosome X"/>
</dbReference>
<dbReference type="Bgee" id="FBgn0000427">
    <property type="expression patterns" value="Expressed in polar follicle cell (Drosophila) in ovary and 39 other cell types or tissues"/>
</dbReference>
<dbReference type="ExpressionAtlas" id="P18170">
    <property type="expression patterns" value="baseline and differential"/>
</dbReference>
<dbReference type="GO" id="GO:0042600">
    <property type="term" value="C:egg chorion"/>
    <property type="evidence" value="ECO:0000314"/>
    <property type="project" value="UniProtKB"/>
</dbReference>
<dbReference type="GO" id="GO:0005576">
    <property type="term" value="C:extracellular region"/>
    <property type="evidence" value="ECO:0007669"/>
    <property type="project" value="UniProtKB-SubCell"/>
</dbReference>
<dbReference type="GO" id="GO:0005634">
    <property type="term" value="C:nucleus"/>
    <property type="evidence" value="ECO:0000318"/>
    <property type="project" value="GO_Central"/>
</dbReference>
<dbReference type="GO" id="GO:0000987">
    <property type="term" value="F:cis-regulatory region sequence-specific DNA binding"/>
    <property type="evidence" value="ECO:0000318"/>
    <property type="project" value="GO_Central"/>
</dbReference>
<dbReference type="GO" id="GO:0000981">
    <property type="term" value="F:DNA-binding transcription factor activity, RNA polymerase II-specific"/>
    <property type="evidence" value="ECO:0000318"/>
    <property type="project" value="GO_Central"/>
</dbReference>
<dbReference type="GO" id="GO:0005213">
    <property type="term" value="F:structural constituent of egg chorion"/>
    <property type="evidence" value="ECO:0000315"/>
    <property type="project" value="UniProtKB"/>
</dbReference>
<dbReference type="GO" id="GO:0007304">
    <property type="term" value="P:chorion-containing eggshell formation"/>
    <property type="evidence" value="ECO:0000315"/>
    <property type="project" value="FlyBase"/>
</dbReference>
<dbReference type="GO" id="GO:0007306">
    <property type="term" value="P:egg chorion assembly"/>
    <property type="evidence" value="ECO:0000315"/>
    <property type="project" value="UniProtKB"/>
</dbReference>
<dbReference type="GO" id="GO:0042594">
    <property type="term" value="P:response to starvation"/>
    <property type="evidence" value="ECO:0000318"/>
    <property type="project" value="GO_Central"/>
</dbReference>
<dbReference type="InterPro" id="IPR006720">
    <property type="entry name" value="DEC-1_C"/>
</dbReference>
<dbReference type="InterPro" id="IPR006719">
    <property type="entry name" value="DEC-1_N"/>
</dbReference>
<dbReference type="InterPro" id="IPR006718">
    <property type="entry name" value="DEC-1_REPEAT"/>
</dbReference>
<dbReference type="Pfam" id="PF04624">
    <property type="entry name" value="Dec-1"/>
    <property type="match status" value="8"/>
</dbReference>
<dbReference type="Pfam" id="PF04626">
    <property type="entry name" value="DEC-1_C"/>
    <property type="match status" value="1"/>
</dbReference>
<dbReference type="Pfam" id="PF04625">
    <property type="entry name" value="DEC-1_N"/>
    <property type="match status" value="1"/>
</dbReference>